<sequence>MIVTTSPNIEGKQIIEYKKIVFGEVITGVNFMKDIGAGLRNFFGGRSQGYEDELINAREEAIREMEQRAKDIGANAVIGVDIDYEVLGADNGMLMVTASGTAVVIEAQDY</sequence>
<accession>P0A4Q9</accession>
<accession>P33382</accession>
<accession>Q8VMZ2</accession>
<reference key="1">
    <citation type="submission" date="1999-09" db="EMBL/GenBank/DDBJ databases">
        <title>The evolution of virulence determinants in the Listeria genus.</title>
        <authorList>
            <person name="Ng E.Y."/>
            <person name="Goebel W."/>
        </authorList>
    </citation>
    <scope>NUCLEOTIDE SEQUENCE [GENOMIC DNA]</scope>
    <source>
        <strain>Serovar 6b</strain>
    </source>
</reference>
<reference key="2">
    <citation type="journal article" date="2001" name="Science">
        <title>Comparative genomics of Listeria species.</title>
        <authorList>
            <person name="Glaser P."/>
            <person name="Frangeul L."/>
            <person name="Buchrieser C."/>
            <person name="Rusniok C."/>
            <person name="Amend A."/>
            <person name="Baquero F."/>
            <person name="Berche P."/>
            <person name="Bloecker H."/>
            <person name="Brandt P."/>
            <person name="Chakraborty T."/>
            <person name="Charbit A."/>
            <person name="Chetouani F."/>
            <person name="Couve E."/>
            <person name="de Daruvar A."/>
            <person name="Dehoux P."/>
            <person name="Domann E."/>
            <person name="Dominguez-Bernal G."/>
            <person name="Duchaud E."/>
            <person name="Durant L."/>
            <person name="Dussurget O."/>
            <person name="Entian K.-D."/>
            <person name="Fsihi H."/>
            <person name="Garcia-del Portillo F."/>
            <person name="Garrido P."/>
            <person name="Gautier L."/>
            <person name="Goebel W."/>
            <person name="Gomez-Lopez N."/>
            <person name="Hain T."/>
            <person name="Hauf J."/>
            <person name="Jackson D."/>
            <person name="Jones L.-M."/>
            <person name="Kaerst U."/>
            <person name="Kreft J."/>
            <person name="Kuhn M."/>
            <person name="Kunst F."/>
            <person name="Kurapkat G."/>
            <person name="Madueno E."/>
            <person name="Maitournam A."/>
            <person name="Mata Vicente J."/>
            <person name="Ng E."/>
            <person name="Nedjari H."/>
            <person name="Nordsiek G."/>
            <person name="Novella S."/>
            <person name="de Pablos B."/>
            <person name="Perez-Diaz J.-C."/>
            <person name="Purcell R."/>
            <person name="Remmel B."/>
            <person name="Rose M."/>
            <person name="Schlueter T."/>
            <person name="Simoes N."/>
            <person name="Tierrez A."/>
            <person name="Vazquez-Boland J.-A."/>
            <person name="Voss H."/>
            <person name="Wehland J."/>
            <person name="Cossart P."/>
        </authorList>
    </citation>
    <scope>NUCLEOTIDE SEQUENCE [LARGE SCALE GENOMIC DNA]</scope>
    <source>
        <strain>ATCC BAA-680 / CLIP 11262</strain>
    </source>
</reference>
<proteinExistence type="inferred from homology"/>
<organism>
    <name type="scientific">Listeria innocua serovar 6a (strain ATCC BAA-680 / CLIP 11262)</name>
    <dbReference type="NCBI Taxonomy" id="272626"/>
    <lineage>
        <taxon>Bacteria</taxon>
        <taxon>Bacillati</taxon>
        <taxon>Bacillota</taxon>
        <taxon>Bacilli</taxon>
        <taxon>Bacillales</taxon>
        <taxon>Listeriaceae</taxon>
        <taxon>Listeria</taxon>
    </lineage>
</organism>
<dbReference type="EMBL" id="AJ249804">
    <property type="protein sequence ID" value="CAC80653.1"/>
    <property type="molecule type" value="Genomic_DNA"/>
</dbReference>
<dbReference type="EMBL" id="AJ249804">
    <property type="protein sequence ID" value="CAC80654.1"/>
    <property type="status" value="ALT_INIT"/>
    <property type="molecule type" value="Genomic_DNA"/>
</dbReference>
<dbReference type="EMBL" id="AL596164">
    <property type="protein sequence ID" value="CAC95473.1"/>
    <property type="molecule type" value="Genomic_DNA"/>
</dbReference>
<dbReference type="PIR" id="AI1462">
    <property type="entry name" value="AI1462"/>
</dbReference>
<dbReference type="RefSeq" id="WP_003725735.1">
    <property type="nucleotide sequence ID" value="NC_003212.1"/>
</dbReference>
<dbReference type="SMR" id="P0A4Q9"/>
<dbReference type="STRING" id="272626.gene:17564552"/>
<dbReference type="KEGG" id="lin:lin0240"/>
<dbReference type="eggNOG" id="COG0393">
    <property type="taxonomic scope" value="Bacteria"/>
</dbReference>
<dbReference type="HOGENOM" id="CLU_117144_3_1_9"/>
<dbReference type="OrthoDB" id="9796448at2"/>
<dbReference type="Proteomes" id="UP000002513">
    <property type="component" value="Chromosome"/>
</dbReference>
<dbReference type="Gene3D" id="3.30.110.70">
    <property type="entry name" value="Hypothetical protein apc22750. Chain B"/>
    <property type="match status" value="1"/>
</dbReference>
<dbReference type="HAMAP" id="MF_00338">
    <property type="entry name" value="UPF0145"/>
    <property type="match status" value="1"/>
</dbReference>
<dbReference type="InterPro" id="IPR035439">
    <property type="entry name" value="UPF0145_dom_sf"/>
</dbReference>
<dbReference type="InterPro" id="IPR002765">
    <property type="entry name" value="UPF0145_YbjQ-like"/>
</dbReference>
<dbReference type="NCBIfam" id="NF002224">
    <property type="entry name" value="PRK01119.1"/>
    <property type="match status" value="1"/>
</dbReference>
<dbReference type="PANTHER" id="PTHR34068">
    <property type="entry name" value="UPF0145 PROTEIN YBJQ"/>
    <property type="match status" value="1"/>
</dbReference>
<dbReference type="PANTHER" id="PTHR34068:SF1">
    <property type="entry name" value="UPF0145 PROTEIN YBJQ"/>
    <property type="match status" value="1"/>
</dbReference>
<dbReference type="Pfam" id="PF01906">
    <property type="entry name" value="YbjQ_1"/>
    <property type="match status" value="1"/>
</dbReference>
<dbReference type="SUPFAM" id="SSF117782">
    <property type="entry name" value="YbjQ-like"/>
    <property type="match status" value="1"/>
</dbReference>
<comment type="similarity">
    <text evidence="1">Belongs to the UPF0145 family.</text>
</comment>
<comment type="sequence caution" evidence="1">
    <conflict type="erroneous initiation">
        <sequence resource="EMBL-CDS" id="CAC80654"/>
    </conflict>
</comment>
<evidence type="ECO:0000305" key="1"/>
<gene>
    <name type="ordered locus">lin0240</name>
</gene>
<feature type="chain" id="PRO_0000138473" description="UPF0145 protein lin0240">
    <location>
        <begin position="1"/>
        <end position="110"/>
    </location>
</feature>
<name>Y240_LISIN</name>
<protein>
    <recommendedName>
        <fullName>UPF0145 protein lin0240</fullName>
    </recommendedName>
</protein>